<organism>
    <name type="scientific">Streptococcus sanguinis (strain SK36)</name>
    <dbReference type="NCBI Taxonomy" id="388919"/>
    <lineage>
        <taxon>Bacteria</taxon>
        <taxon>Bacillati</taxon>
        <taxon>Bacillota</taxon>
        <taxon>Bacilli</taxon>
        <taxon>Lactobacillales</taxon>
        <taxon>Streptococcaceae</taxon>
        <taxon>Streptococcus</taxon>
    </lineage>
</organism>
<accession>A3CN88</accession>
<protein>
    <recommendedName>
        <fullName evidence="1">Orotate phosphoribosyltransferase</fullName>
        <shortName evidence="1">OPRT</shortName>
        <shortName evidence="1">OPRTase</shortName>
        <ecNumber evidence="1">2.4.2.10</ecNumber>
    </recommendedName>
</protein>
<name>PYRE_STRSV</name>
<proteinExistence type="inferred from homology"/>
<keyword id="KW-0328">Glycosyltransferase</keyword>
<keyword id="KW-0460">Magnesium</keyword>
<keyword id="KW-0665">Pyrimidine biosynthesis</keyword>
<keyword id="KW-1185">Reference proteome</keyword>
<keyword id="KW-0808">Transferase</keyword>
<reference key="1">
    <citation type="journal article" date="2007" name="J. Bacteriol.">
        <title>Genome of the opportunistic pathogen Streptococcus sanguinis.</title>
        <authorList>
            <person name="Xu P."/>
            <person name="Alves J.M."/>
            <person name="Kitten T."/>
            <person name="Brown A."/>
            <person name="Chen Z."/>
            <person name="Ozaki L.S."/>
            <person name="Manque P."/>
            <person name="Ge X."/>
            <person name="Serrano M.G."/>
            <person name="Puiu D."/>
            <person name="Hendricks S."/>
            <person name="Wang Y."/>
            <person name="Chaplin M.D."/>
            <person name="Akan D."/>
            <person name="Paik S."/>
            <person name="Peterson D.L."/>
            <person name="Macrina F.L."/>
            <person name="Buck G.A."/>
        </authorList>
    </citation>
    <scope>NUCLEOTIDE SEQUENCE [LARGE SCALE GENOMIC DNA]</scope>
    <source>
        <strain>SK36</strain>
    </source>
</reference>
<evidence type="ECO:0000255" key="1">
    <source>
        <dbReference type="HAMAP-Rule" id="MF_01208"/>
    </source>
</evidence>
<feature type="chain" id="PRO_1000066313" description="Orotate phosphoribosyltransferase">
    <location>
        <begin position="1"/>
        <end position="209"/>
    </location>
</feature>
<feature type="binding site" evidence="1">
    <location>
        <position position="96"/>
    </location>
    <ligand>
        <name>5-phospho-alpha-D-ribose 1-diphosphate</name>
        <dbReference type="ChEBI" id="CHEBI:58017"/>
        <note>ligand shared between dimeric partners</note>
    </ligand>
</feature>
<feature type="binding site" evidence="1">
    <location>
        <position position="100"/>
    </location>
    <ligand>
        <name>5-phospho-alpha-D-ribose 1-diphosphate</name>
        <dbReference type="ChEBI" id="CHEBI:58017"/>
        <note>ligand shared between dimeric partners</note>
    </ligand>
</feature>
<feature type="binding site" evidence="1">
    <location>
        <position position="102"/>
    </location>
    <ligand>
        <name>5-phospho-alpha-D-ribose 1-diphosphate</name>
        <dbReference type="ChEBI" id="CHEBI:58017"/>
        <note>ligand shared between dimeric partners</note>
    </ligand>
</feature>
<feature type="binding site" description="in other chain" evidence="1">
    <location>
        <begin position="122"/>
        <end position="130"/>
    </location>
    <ligand>
        <name>5-phospho-alpha-D-ribose 1-diphosphate</name>
        <dbReference type="ChEBI" id="CHEBI:58017"/>
        <note>ligand shared between dimeric partners</note>
    </ligand>
</feature>
<feature type="binding site" evidence="1">
    <location>
        <position position="126"/>
    </location>
    <ligand>
        <name>orotate</name>
        <dbReference type="ChEBI" id="CHEBI:30839"/>
    </ligand>
</feature>
<sequence>MTLAKEIARDLLKIKAVYLKPEEPFTWASGIKSPIYTDNRVTLAYPETRTLIEDGFVEKIQAEFPDVEVIAGTATAGIPHGAIIADKMNLPFAYIRSKPKDHGAGNQIEGRVAPGQKMVVIEDLISTGGSVLDAIAAAKREGADVIGAAAIFTYELPKAEKNFNEAGVKLVTLSNYTELITLAEAEGYVSPEGLALLEKFKHDQENWQA</sequence>
<comment type="function">
    <text evidence="1">Catalyzes the transfer of a ribosyl phosphate group from 5-phosphoribose 1-diphosphate to orotate, leading to the formation of orotidine monophosphate (OMP).</text>
</comment>
<comment type="catalytic activity">
    <reaction evidence="1">
        <text>orotidine 5'-phosphate + diphosphate = orotate + 5-phospho-alpha-D-ribose 1-diphosphate</text>
        <dbReference type="Rhea" id="RHEA:10380"/>
        <dbReference type="ChEBI" id="CHEBI:30839"/>
        <dbReference type="ChEBI" id="CHEBI:33019"/>
        <dbReference type="ChEBI" id="CHEBI:57538"/>
        <dbReference type="ChEBI" id="CHEBI:58017"/>
        <dbReference type="EC" id="2.4.2.10"/>
    </reaction>
</comment>
<comment type="cofactor">
    <cofactor evidence="1">
        <name>Mg(2+)</name>
        <dbReference type="ChEBI" id="CHEBI:18420"/>
    </cofactor>
</comment>
<comment type="pathway">
    <text evidence="1">Pyrimidine metabolism; UMP biosynthesis via de novo pathway; UMP from orotate: step 1/2.</text>
</comment>
<comment type="subunit">
    <text evidence="1">Homodimer.</text>
</comment>
<comment type="similarity">
    <text evidence="1">Belongs to the purine/pyrimidine phosphoribosyltransferase family. PyrE subfamily.</text>
</comment>
<gene>
    <name evidence="1" type="primary">pyrE</name>
    <name type="ordered locus">SSA_1240</name>
</gene>
<dbReference type="EC" id="2.4.2.10" evidence="1"/>
<dbReference type="EMBL" id="CP000387">
    <property type="protein sequence ID" value="ABN44643.1"/>
    <property type="molecule type" value="Genomic_DNA"/>
</dbReference>
<dbReference type="RefSeq" id="WP_011837013.1">
    <property type="nucleotide sequence ID" value="NC_009009.1"/>
</dbReference>
<dbReference type="RefSeq" id="YP_001035193.1">
    <property type="nucleotide sequence ID" value="NC_009009.1"/>
</dbReference>
<dbReference type="SMR" id="A3CN88"/>
<dbReference type="STRING" id="388919.SSA_1240"/>
<dbReference type="KEGG" id="ssa:SSA_1240"/>
<dbReference type="PATRIC" id="fig|388919.9.peg.1180"/>
<dbReference type="eggNOG" id="COG0461">
    <property type="taxonomic scope" value="Bacteria"/>
</dbReference>
<dbReference type="HOGENOM" id="CLU_074878_1_1_9"/>
<dbReference type="OrthoDB" id="9802134at2"/>
<dbReference type="UniPathway" id="UPA00070">
    <property type="reaction ID" value="UER00119"/>
</dbReference>
<dbReference type="Proteomes" id="UP000002148">
    <property type="component" value="Chromosome"/>
</dbReference>
<dbReference type="GO" id="GO:0000287">
    <property type="term" value="F:magnesium ion binding"/>
    <property type="evidence" value="ECO:0007669"/>
    <property type="project" value="UniProtKB-UniRule"/>
</dbReference>
<dbReference type="GO" id="GO:0004588">
    <property type="term" value="F:orotate phosphoribosyltransferase activity"/>
    <property type="evidence" value="ECO:0007669"/>
    <property type="project" value="UniProtKB-UniRule"/>
</dbReference>
<dbReference type="GO" id="GO:0044205">
    <property type="term" value="P:'de novo' UMP biosynthetic process"/>
    <property type="evidence" value="ECO:0007669"/>
    <property type="project" value="UniProtKB-UniRule"/>
</dbReference>
<dbReference type="GO" id="GO:0019856">
    <property type="term" value="P:pyrimidine nucleobase biosynthetic process"/>
    <property type="evidence" value="ECO:0007669"/>
    <property type="project" value="TreeGrafter"/>
</dbReference>
<dbReference type="CDD" id="cd06223">
    <property type="entry name" value="PRTases_typeI"/>
    <property type="match status" value="1"/>
</dbReference>
<dbReference type="Gene3D" id="3.40.50.2020">
    <property type="match status" value="1"/>
</dbReference>
<dbReference type="HAMAP" id="MF_01208">
    <property type="entry name" value="PyrE"/>
    <property type="match status" value="1"/>
</dbReference>
<dbReference type="InterPro" id="IPR023031">
    <property type="entry name" value="OPRT"/>
</dbReference>
<dbReference type="InterPro" id="IPR004467">
    <property type="entry name" value="Or_phspho_trans_dom"/>
</dbReference>
<dbReference type="InterPro" id="IPR000836">
    <property type="entry name" value="PRibTrfase_dom"/>
</dbReference>
<dbReference type="InterPro" id="IPR029057">
    <property type="entry name" value="PRTase-like"/>
</dbReference>
<dbReference type="NCBIfam" id="TIGR00336">
    <property type="entry name" value="pyrE"/>
    <property type="match status" value="1"/>
</dbReference>
<dbReference type="PANTHER" id="PTHR19278">
    <property type="entry name" value="OROTATE PHOSPHORIBOSYLTRANSFERASE"/>
    <property type="match status" value="1"/>
</dbReference>
<dbReference type="PANTHER" id="PTHR19278:SF9">
    <property type="entry name" value="URIDINE 5'-MONOPHOSPHATE SYNTHASE"/>
    <property type="match status" value="1"/>
</dbReference>
<dbReference type="Pfam" id="PF00156">
    <property type="entry name" value="Pribosyltran"/>
    <property type="match status" value="1"/>
</dbReference>
<dbReference type="SUPFAM" id="SSF53271">
    <property type="entry name" value="PRTase-like"/>
    <property type="match status" value="1"/>
</dbReference>
<dbReference type="PROSITE" id="PS00103">
    <property type="entry name" value="PUR_PYR_PR_TRANSFER"/>
    <property type="match status" value="1"/>
</dbReference>